<comment type="function">
    <text evidence="5">May play a protective role in mucosal tissues by preventing exaggerated allergic responses.</text>
</comment>
<comment type="subcellular location">
    <subcellularLocation>
        <location evidence="6">Mitochondrion</location>
    </subcellularLocation>
</comment>
<comment type="tissue specificity">
    <text evidence="5">Expressed in epithelial cells of airways, peripheral bronchioles and alveoli, as well as in the basal cell layer of the epidermis (at protein level).</text>
</comment>
<comment type="PTM">
    <text evidence="1">Proteolytically cleaved by PARL.</text>
</comment>
<comment type="disruption phenotype">
    <text evidence="5">The viability of homozygous knockout embryos is dramatically decreased after 10.0 dpc. Surviving animals have a normal life expectancy, but males are infertile. Ovalbumin sensitization and challenge of heterozygous mice results in a significant increase in pulmonary inflammation, mucous cell metaplasia, airway hyperresponsiveness and ovalbumin-specific IgE compared with wild-type animals. This exacerbation is associated with an increase in CD4(+) IL13(+) T helper cells, as well as an increase IL4, IL5 and IL13 cytokine production in lungs. Sensitized and/or challenged mutant animals show an increased lung epithelial permeability and activation of pro-inflammatory dendritic cells. At 6-7 months of age, about 30% of heterozygous mice develop skin lesions, with significant thickening of the epidermis, including the cornified layer, predominately on the ears and back. Lesions are accompanied by vigorous scratching. In the lesions, IL4, IL5 and IL13 cytokine production is increased and serum IgE levels are up-regulated at the time of appearance of skin lesions.</text>
</comment>
<dbReference type="EMBL" id="AL845368">
    <property type="status" value="NOT_ANNOTATED_CDS"/>
    <property type="molecule type" value="Genomic_DNA"/>
</dbReference>
<dbReference type="EMBL" id="BC017524">
    <property type="protein sequence ID" value="AAH17524.2"/>
    <property type="molecule type" value="mRNA"/>
</dbReference>
<dbReference type="CCDS" id="CCDS16698.2"/>
<dbReference type="RefSeq" id="NP_647469.2">
    <property type="nucleotide sequence ID" value="NM_139308.3"/>
</dbReference>
<dbReference type="SMR" id="Q8R1R3"/>
<dbReference type="BioGRID" id="221192">
    <property type="interactions" value="2"/>
</dbReference>
<dbReference type="FunCoup" id="Q8R1R3">
    <property type="interactions" value="1620"/>
</dbReference>
<dbReference type="STRING" id="10090.ENSMUSP00000106004"/>
<dbReference type="iPTMnet" id="Q8R1R3"/>
<dbReference type="PhosphoSitePlus" id="Q8R1R3"/>
<dbReference type="PaxDb" id="10090-ENSMUSP00000106004"/>
<dbReference type="ProteomicsDB" id="258750"/>
<dbReference type="Pumba" id="Q8R1R3"/>
<dbReference type="Antibodypedia" id="32404">
    <property type="antibodies" value="151 antibodies from 23 providers"/>
</dbReference>
<dbReference type="DNASU" id="99138"/>
<dbReference type="Ensembl" id="ENSMUST00000110375.9">
    <property type="protein sequence ID" value="ENSMUSP00000106004.3"/>
    <property type="gene ID" value="ENSMUSG00000027367.17"/>
</dbReference>
<dbReference type="GeneID" id="99138"/>
<dbReference type="KEGG" id="mmu:99138"/>
<dbReference type="UCSC" id="uc008mfe.2">
    <property type="organism name" value="mouse"/>
</dbReference>
<dbReference type="AGR" id="MGI:2139090"/>
<dbReference type="CTD" id="56910"/>
<dbReference type="MGI" id="MGI:2139090">
    <property type="gene designation" value="Stard7"/>
</dbReference>
<dbReference type="VEuPathDB" id="HostDB:ENSMUSG00000027367"/>
<dbReference type="eggNOG" id="KOG2761">
    <property type="taxonomic scope" value="Eukaryota"/>
</dbReference>
<dbReference type="GeneTree" id="ENSGT00940000157856"/>
<dbReference type="InParanoid" id="Q8R1R3"/>
<dbReference type="OMA" id="NQLCERC"/>
<dbReference type="OrthoDB" id="58045at9989"/>
<dbReference type="TreeFam" id="TF320705"/>
<dbReference type="Reactome" id="R-MMU-1483191">
    <property type="pathway name" value="Synthesis of PC"/>
</dbReference>
<dbReference type="Reactome" id="R-MMU-2142789">
    <property type="pathway name" value="Ubiquinol biosynthesis"/>
</dbReference>
<dbReference type="BioGRID-ORCS" id="99138">
    <property type="hits" value="13 hits in 79 CRISPR screens"/>
</dbReference>
<dbReference type="ChiTaRS" id="Stard7">
    <property type="organism name" value="mouse"/>
</dbReference>
<dbReference type="PRO" id="PR:Q8R1R3"/>
<dbReference type="Proteomes" id="UP000000589">
    <property type="component" value="Chromosome 2"/>
</dbReference>
<dbReference type="RNAct" id="Q8R1R3">
    <property type="molecule type" value="protein"/>
</dbReference>
<dbReference type="Bgee" id="ENSMUSG00000027367">
    <property type="expression patterns" value="Expressed in retinal neural layer and 259 other cell types or tissues"/>
</dbReference>
<dbReference type="ExpressionAtlas" id="Q8R1R3">
    <property type="expression patterns" value="baseline and differential"/>
</dbReference>
<dbReference type="GO" id="GO:0005737">
    <property type="term" value="C:cytoplasm"/>
    <property type="evidence" value="ECO:0000314"/>
    <property type="project" value="MGI"/>
</dbReference>
<dbReference type="GO" id="GO:0005576">
    <property type="term" value="C:extracellular region"/>
    <property type="evidence" value="ECO:0007669"/>
    <property type="project" value="GOC"/>
</dbReference>
<dbReference type="GO" id="GO:0005739">
    <property type="term" value="C:mitochondrion"/>
    <property type="evidence" value="ECO:0007669"/>
    <property type="project" value="UniProtKB-SubCell"/>
</dbReference>
<dbReference type="GO" id="GO:0008289">
    <property type="term" value="F:lipid binding"/>
    <property type="evidence" value="ECO:0007669"/>
    <property type="project" value="InterPro"/>
</dbReference>
<dbReference type="GO" id="GO:0140104">
    <property type="term" value="F:molecular carrier activity"/>
    <property type="evidence" value="ECO:0000315"/>
    <property type="project" value="MGI"/>
</dbReference>
<dbReference type="GO" id="GO:0061436">
    <property type="term" value="P:establishment of skin barrier"/>
    <property type="evidence" value="ECO:0000315"/>
    <property type="project" value="MGI"/>
</dbReference>
<dbReference type="GO" id="GO:0006954">
    <property type="term" value="P:inflammatory response"/>
    <property type="evidence" value="ECO:0000315"/>
    <property type="project" value="MGI"/>
</dbReference>
<dbReference type="GO" id="GO:0120197">
    <property type="term" value="P:mucociliary clearance"/>
    <property type="evidence" value="ECO:0000315"/>
    <property type="project" value="MGI"/>
</dbReference>
<dbReference type="GO" id="GO:0001773">
    <property type="term" value="P:myeloid dendritic cell activation"/>
    <property type="evidence" value="ECO:0000315"/>
    <property type="project" value="MGI"/>
</dbReference>
<dbReference type="GO" id="GO:0042092">
    <property type="term" value="P:type 2 immune response"/>
    <property type="evidence" value="ECO:0000315"/>
    <property type="project" value="MGI"/>
</dbReference>
<dbReference type="CDD" id="cd08911">
    <property type="entry name" value="START_STARD7-like"/>
    <property type="match status" value="1"/>
</dbReference>
<dbReference type="FunFam" id="3.30.530.20:FF:000016">
    <property type="entry name" value="StAR-related lipid transfer protein 7, mitochondrial"/>
    <property type="match status" value="1"/>
</dbReference>
<dbReference type="Gene3D" id="3.30.530.20">
    <property type="match status" value="1"/>
</dbReference>
<dbReference type="InterPro" id="IPR023393">
    <property type="entry name" value="START-like_dom_sf"/>
</dbReference>
<dbReference type="InterPro" id="IPR002913">
    <property type="entry name" value="START_lipid-bd_dom"/>
</dbReference>
<dbReference type="InterPro" id="IPR051213">
    <property type="entry name" value="START_lipid_transfer"/>
</dbReference>
<dbReference type="InterPro" id="IPR041949">
    <property type="entry name" value="START_STARD7"/>
</dbReference>
<dbReference type="PANTHER" id="PTHR19308">
    <property type="entry name" value="PHOSPHATIDYLCHOLINE TRANSFER PROTEIN"/>
    <property type="match status" value="1"/>
</dbReference>
<dbReference type="PANTHER" id="PTHR19308:SF8">
    <property type="entry name" value="STAR-RELATED LIPID TRANSFER PROTEIN 7, MITOCHONDRIAL"/>
    <property type="match status" value="1"/>
</dbReference>
<dbReference type="Pfam" id="PF01852">
    <property type="entry name" value="START"/>
    <property type="match status" value="1"/>
</dbReference>
<dbReference type="SMART" id="SM00234">
    <property type="entry name" value="START"/>
    <property type="match status" value="1"/>
</dbReference>
<dbReference type="SUPFAM" id="SSF55961">
    <property type="entry name" value="Bet v1-like"/>
    <property type="match status" value="1"/>
</dbReference>
<dbReference type="PROSITE" id="PS50848">
    <property type="entry name" value="START"/>
    <property type="match status" value="1"/>
</dbReference>
<organism>
    <name type="scientific">Mus musculus</name>
    <name type="common">Mouse</name>
    <dbReference type="NCBI Taxonomy" id="10090"/>
    <lineage>
        <taxon>Eukaryota</taxon>
        <taxon>Metazoa</taxon>
        <taxon>Chordata</taxon>
        <taxon>Craniata</taxon>
        <taxon>Vertebrata</taxon>
        <taxon>Euteleostomi</taxon>
        <taxon>Mammalia</taxon>
        <taxon>Eutheria</taxon>
        <taxon>Euarchontoglires</taxon>
        <taxon>Glires</taxon>
        <taxon>Rodentia</taxon>
        <taxon>Myomorpha</taxon>
        <taxon>Muroidea</taxon>
        <taxon>Muridae</taxon>
        <taxon>Murinae</taxon>
        <taxon>Mus</taxon>
        <taxon>Mus</taxon>
    </lineage>
</organism>
<keyword id="KW-0175">Coiled coil</keyword>
<keyword id="KW-0496">Mitochondrion</keyword>
<keyword id="KW-1185">Reference proteome</keyword>
<keyword id="KW-0809">Transit peptide</keyword>
<gene>
    <name type="primary">Stard7</name>
</gene>
<feature type="transit peptide" description="Mitochondrion" evidence="2">
    <location>
        <begin position="1"/>
        <end position="61"/>
    </location>
</feature>
<feature type="chain" id="PRO_0000220675" description="StAR-related lipid transfer protein 7, mitochondrial">
    <location>
        <begin position="62"/>
        <end position="373"/>
    </location>
</feature>
<feature type="domain" description="START" evidence="3">
    <location>
        <begin position="115"/>
        <end position="330"/>
    </location>
</feature>
<feature type="region of interest" description="Disordered" evidence="4">
    <location>
        <begin position="118"/>
        <end position="141"/>
    </location>
</feature>
<feature type="region of interest" description="Disordered" evidence="4">
    <location>
        <begin position="347"/>
        <end position="373"/>
    </location>
</feature>
<feature type="coiled-coil region" evidence="2">
    <location>
        <begin position="89"/>
        <end position="114"/>
    </location>
</feature>
<feature type="site" description="Cleavage; by PARL" evidence="1">
    <location>
        <begin position="80"/>
        <end position="81"/>
    </location>
</feature>
<proteinExistence type="evidence at protein level"/>
<sequence length="373" mass="43144">MFPRRPPATLAAWLAGARGGGLLSALANQCRFVTGLRVRRAQQIAQLYGRLYSESSRCALLGRFWRRLRGRPGHASVLMAALSGVFVWDEERIQEEELQRSINEMKRLEEMSNIFQSSGVENYPPEPKSPAGGNEKSKDKEEPWEMVMDKKHFKLWRRPITGTHLYQYRVFGTYTDVTPRQFFNVQLDTEYRKKWDALVIKLEVIERDAVSGSEVLHWVTHFPYPMYSRDYVYVRRYSVDQENNVMVLVSRAVEHPSVPESPEFVRVRSYESQMVIRPHKSFDENGFDYLLTYSDNPQTVFPRYCVSWMVSSGMPDFLEKLHMATLKAKNMEIKVKDYISAKPLEMSSEAKATAPSPERKNEGSCGPARIEYA</sequence>
<evidence type="ECO:0000250" key="1">
    <source>
        <dbReference type="UniProtKB" id="Q9NQZ5"/>
    </source>
</evidence>
<evidence type="ECO:0000255" key="2"/>
<evidence type="ECO:0000255" key="3">
    <source>
        <dbReference type="PROSITE-ProRule" id="PRU00197"/>
    </source>
</evidence>
<evidence type="ECO:0000256" key="4">
    <source>
        <dbReference type="SAM" id="MobiDB-lite"/>
    </source>
</evidence>
<evidence type="ECO:0000269" key="5">
    <source>
    </source>
</evidence>
<evidence type="ECO:0000305" key="6"/>
<reference key="1">
    <citation type="journal article" date="2009" name="PLoS Biol.">
        <title>Lineage-specific biology revealed by a finished genome assembly of the mouse.</title>
        <authorList>
            <person name="Church D.M."/>
            <person name="Goodstadt L."/>
            <person name="Hillier L.W."/>
            <person name="Zody M.C."/>
            <person name="Goldstein S."/>
            <person name="She X."/>
            <person name="Bult C.J."/>
            <person name="Agarwala R."/>
            <person name="Cherry J.L."/>
            <person name="DiCuccio M."/>
            <person name="Hlavina W."/>
            <person name="Kapustin Y."/>
            <person name="Meric P."/>
            <person name="Maglott D."/>
            <person name="Birtle Z."/>
            <person name="Marques A.C."/>
            <person name="Graves T."/>
            <person name="Zhou S."/>
            <person name="Teague B."/>
            <person name="Potamousis K."/>
            <person name="Churas C."/>
            <person name="Place M."/>
            <person name="Herschleb J."/>
            <person name="Runnheim R."/>
            <person name="Forrest D."/>
            <person name="Amos-Landgraf J."/>
            <person name="Schwartz D.C."/>
            <person name="Cheng Z."/>
            <person name="Lindblad-Toh K."/>
            <person name="Eichler E.E."/>
            <person name="Ponting C.P."/>
        </authorList>
    </citation>
    <scope>NUCLEOTIDE SEQUENCE [LARGE SCALE GENOMIC DNA]</scope>
    <source>
        <strain>C57BL/6J</strain>
    </source>
</reference>
<reference key="2">
    <citation type="journal article" date="2004" name="Genome Res.">
        <title>The status, quality, and expansion of the NIH full-length cDNA project: the Mammalian Gene Collection (MGC).</title>
        <authorList>
            <consortium name="The MGC Project Team"/>
        </authorList>
    </citation>
    <scope>NUCLEOTIDE SEQUENCE [LARGE SCALE MRNA]</scope>
    <source>
        <tissue>Eye</tissue>
    </source>
</reference>
<reference key="3">
    <citation type="journal article" date="2010" name="Cell">
        <title>A tissue-specific atlas of mouse protein phosphorylation and expression.</title>
        <authorList>
            <person name="Huttlin E.L."/>
            <person name="Jedrychowski M.P."/>
            <person name="Elias J.E."/>
            <person name="Goswami T."/>
            <person name="Rad R."/>
            <person name="Beausoleil S.A."/>
            <person name="Villen J."/>
            <person name="Haas W."/>
            <person name="Sowa M.E."/>
            <person name="Gygi S.P."/>
        </authorList>
    </citation>
    <scope>IDENTIFICATION BY MASS SPECTROMETRY [LARGE SCALE ANALYSIS]</scope>
    <source>
        <tissue>Brown adipose tissue</tissue>
    </source>
</reference>
<reference key="4">
    <citation type="journal article" date="2015" name="J. Immunol.">
        <title>Haploinsufficiency for Stard7 is associated with enhanced allergic responses in lung and skin.</title>
        <authorList>
            <person name="Yang L."/>
            <person name="Lewkowich I."/>
            <person name="Apsley K."/>
            <person name="Fritz J.M."/>
            <person name="Wills-Karp M."/>
            <person name="Weaver T.E."/>
        </authorList>
    </citation>
    <scope>FUNCTION</scope>
    <scope>DISRUPTION PHENOTYPE</scope>
    <scope>TISSUE SPECIFICITY</scope>
</reference>
<accession>Q8R1R3</accession>
<accession>A2ARG0</accession>
<name>STAR7_MOUSE</name>
<protein>
    <recommendedName>
        <fullName>StAR-related lipid transfer protein 7, mitochondrial</fullName>
    </recommendedName>
    <alternativeName>
        <fullName>START domain-containing protein 7</fullName>
        <shortName>StARD7</shortName>
    </alternativeName>
</protein>